<gene>
    <name evidence="1" type="primary">ung</name>
    <name type="ordered locus">IL0522</name>
</gene>
<protein>
    <recommendedName>
        <fullName evidence="1">Uracil-DNA glycosylase</fullName>
        <shortName evidence="1">UDG</shortName>
        <ecNumber evidence="1">3.2.2.27</ecNumber>
    </recommendedName>
</protein>
<sequence length="216" mass="24473">MPWSTLLAEEKQKPYFQQLWQRVEQARQETVVYPPKEDVFNALKLTDPENIKVVILGQDPYHGPGQAHGLSFSVPEGVKFPPSLRNMFKAIAIDYPDTVLPQHGDLTSWAEQGVLLLNTVLTVEQGNAHSHASWGWETFTDTVISKVSDATDHVVFLLWGSHAQKKIPLIDGNKHCILTAPHPSPLSAHRGFFDANHFRKTNDYLQQHGRQPIRWV</sequence>
<dbReference type="EC" id="3.2.2.27" evidence="1"/>
<dbReference type="EMBL" id="AE017340">
    <property type="protein sequence ID" value="AAV81364.1"/>
    <property type="molecule type" value="Genomic_DNA"/>
</dbReference>
<dbReference type="RefSeq" id="WP_011233781.1">
    <property type="nucleotide sequence ID" value="NC_006512.1"/>
</dbReference>
<dbReference type="SMR" id="Q5R080"/>
<dbReference type="STRING" id="283942.IL0522"/>
<dbReference type="GeneID" id="41335673"/>
<dbReference type="KEGG" id="ilo:IL0522"/>
<dbReference type="eggNOG" id="COG0692">
    <property type="taxonomic scope" value="Bacteria"/>
</dbReference>
<dbReference type="HOGENOM" id="CLU_032162_3_0_6"/>
<dbReference type="OrthoDB" id="9804372at2"/>
<dbReference type="Proteomes" id="UP000001171">
    <property type="component" value="Chromosome"/>
</dbReference>
<dbReference type="GO" id="GO:0005737">
    <property type="term" value="C:cytoplasm"/>
    <property type="evidence" value="ECO:0007669"/>
    <property type="project" value="UniProtKB-SubCell"/>
</dbReference>
<dbReference type="GO" id="GO:0004844">
    <property type="term" value="F:uracil DNA N-glycosylase activity"/>
    <property type="evidence" value="ECO:0007669"/>
    <property type="project" value="UniProtKB-UniRule"/>
</dbReference>
<dbReference type="GO" id="GO:0097510">
    <property type="term" value="P:base-excision repair, AP site formation via deaminated base removal"/>
    <property type="evidence" value="ECO:0007669"/>
    <property type="project" value="TreeGrafter"/>
</dbReference>
<dbReference type="CDD" id="cd10027">
    <property type="entry name" value="UDG-F1-like"/>
    <property type="match status" value="1"/>
</dbReference>
<dbReference type="FunFam" id="3.40.470.10:FF:000001">
    <property type="entry name" value="Uracil-DNA glycosylase"/>
    <property type="match status" value="1"/>
</dbReference>
<dbReference type="Gene3D" id="3.40.470.10">
    <property type="entry name" value="Uracil-DNA glycosylase-like domain"/>
    <property type="match status" value="1"/>
</dbReference>
<dbReference type="HAMAP" id="MF_00148">
    <property type="entry name" value="UDG"/>
    <property type="match status" value="1"/>
</dbReference>
<dbReference type="InterPro" id="IPR002043">
    <property type="entry name" value="UDG_fam1"/>
</dbReference>
<dbReference type="InterPro" id="IPR018085">
    <property type="entry name" value="Ura-DNA_Glyclase_AS"/>
</dbReference>
<dbReference type="InterPro" id="IPR005122">
    <property type="entry name" value="Uracil-DNA_glycosylase-like"/>
</dbReference>
<dbReference type="InterPro" id="IPR036895">
    <property type="entry name" value="Uracil-DNA_glycosylase-like_sf"/>
</dbReference>
<dbReference type="NCBIfam" id="NF003588">
    <property type="entry name" value="PRK05254.1-1"/>
    <property type="match status" value="1"/>
</dbReference>
<dbReference type="NCBIfam" id="NF003589">
    <property type="entry name" value="PRK05254.1-2"/>
    <property type="match status" value="1"/>
</dbReference>
<dbReference type="NCBIfam" id="NF003591">
    <property type="entry name" value="PRK05254.1-4"/>
    <property type="match status" value="1"/>
</dbReference>
<dbReference type="NCBIfam" id="NF003592">
    <property type="entry name" value="PRK05254.1-5"/>
    <property type="match status" value="1"/>
</dbReference>
<dbReference type="NCBIfam" id="TIGR00628">
    <property type="entry name" value="ung"/>
    <property type="match status" value="1"/>
</dbReference>
<dbReference type="PANTHER" id="PTHR11264">
    <property type="entry name" value="URACIL-DNA GLYCOSYLASE"/>
    <property type="match status" value="1"/>
</dbReference>
<dbReference type="PANTHER" id="PTHR11264:SF0">
    <property type="entry name" value="URACIL-DNA GLYCOSYLASE"/>
    <property type="match status" value="1"/>
</dbReference>
<dbReference type="Pfam" id="PF03167">
    <property type="entry name" value="UDG"/>
    <property type="match status" value="1"/>
</dbReference>
<dbReference type="SMART" id="SM00986">
    <property type="entry name" value="UDG"/>
    <property type="match status" value="1"/>
</dbReference>
<dbReference type="SMART" id="SM00987">
    <property type="entry name" value="UreE_C"/>
    <property type="match status" value="1"/>
</dbReference>
<dbReference type="SUPFAM" id="SSF52141">
    <property type="entry name" value="Uracil-DNA glycosylase-like"/>
    <property type="match status" value="1"/>
</dbReference>
<dbReference type="PROSITE" id="PS00130">
    <property type="entry name" value="U_DNA_GLYCOSYLASE"/>
    <property type="match status" value="1"/>
</dbReference>
<accession>Q5R080</accession>
<keyword id="KW-0963">Cytoplasm</keyword>
<keyword id="KW-0227">DNA damage</keyword>
<keyword id="KW-0234">DNA repair</keyword>
<keyword id="KW-0378">Hydrolase</keyword>
<keyword id="KW-1185">Reference proteome</keyword>
<comment type="function">
    <text evidence="1">Excises uracil residues from the DNA which can arise as a result of misincorporation of dUMP residues by DNA polymerase or due to deamination of cytosine.</text>
</comment>
<comment type="catalytic activity">
    <reaction evidence="1">
        <text>Hydrolyzes single-stranded DNA or mismatched double-stranded DNA and polynucleotides, releasing free uracil.</text>
        <dbReference type="EC" id="3.2.2.27"/>
    </reaction>
</comment>
<comment type="subcellular location">
    <subcellularLocation>
        <location evidence="1">Cytoplasm</location>
    </subcellularLocation>
</comment>
<comment type="similarity">
    <text evidence="1">Belongs to the uracil-DNA glycosylase (UDG) superfamily. UNG family.</text>
</comment>
<feature type="chain" id="PRO_0000176104" description="Uracil-DNA glycosylase">
    <location>
        <begin position="1"/>
        <end position="216"/>
    </location>
</feature>
<feature type="active site" description="Proton acceptor" evidence="1">
    <location>
        <position position="59"/>
    </location>
</feature>
<name>UNG_IDILO</name>
<proteinExistence type="inferred from homology"/>
<organism>
    <name type="scientific">Idiomarina loihiensis (strain ATCC BAA-735 / DSM 15497 / L2-TR)</name>
    <dbReference type="NCBI Taxonomy" id="283942"/>
    <lineage>
        <taxon>Bacteria</taxon>
        <taxon>Pseudomonadati</taxon>
        <taxon>Pseudomonadota</taxon>
        <taxon>Gammaproteobacteria</taxon>
        <taxon>Alteromonadales</taxon>
        <taxon>Idiomarinaceae</taxon>
        <taxon>Idiomarina</taxon>
    </lineage>
</organism>
<reference key="1">
    <citation type="journal article" date="2004" name="Proc. Natl. Acad. Sci. U.S.A.">
        <title>Genome sequence of the deep-sea gamma-proteobacterium Idiomarina loihiensis reveals amino acid fermentation as a source of carbon and energy.</title>
        <authorList>
            <person name="Hou S."/>
            <person name="Saw J.H."/>
            <person name="Lee K.S."/>
            <person name="Freitas T.A."/>
            <person name="Belisle C."/>
            <person name="Kawarabayasi Y."/>
            <person name="Donachie S.P."/>
            <person name="Pikina A."/>
            <person name="Galperin M.Y."/>
            <person name="Koonin E.V."/>
            <person name="Makarova K.S."/>
            <person name="Omelchenko M.V."/>
            <person name="Sorokin A."/>
            <person name="Wolf Y.I."/>
            <person name="Li Q.X."/>
            <person name="Keum Y.S."/>
            <person name="Campbell S."/>
            <person name="Denery J."/>
            <person name="Aizawa S."/>
            <person name="Shibata S."/>
            <person name="Malahoff A."/>
            <person name="Alam M."/>
        </authorList>
    </citation>
    <scope>NUCLEOTIDE SEQUENCE [LARGE SCALE GENOMIC DNA]</scope>
    <source>
        <strain>ATCC BAA-735 / DSM 15497 / L2-TR</strain>
    </source>
</reference>
<evidence type="ECO:0000255" key="1">
    <source>
        <dbReference type="HAMAP-Rule" id="MF_00148"/>
    </source>
</evidence>